<comment type="function">
    <text evidence="1">Plays an essential role in the virus replication cycle by acting as a viroporin. Creates a pore in the host endoplasmic reticulum and as a consequence releases Ca(2+) in the cytoplasm of infected cell. In turn, high levels of cytoplasmic calcium trigger membrane trafficking and transport of viral ER-associated proteins to viroplasms, sites of viral genome replication and immature particle assembly.</text>
</comment>
<comment type="function">
    <text evidence="1">The secreted form acts as an enterotoxin that causes phospholipase C-dependent elevation of the intracellular calcium concentration in host intestinal mucosa cells. Increased concentration of intracellular calcium disrupts the cytoskeleton and the tight junctions, raising the paracellular permeability. Potentiates chloride ion secretion through a calcium ion-dependent signaling pathway, inducing age-dependent diarrhea. To perform this enterotoxigenic role in vivo, NSP4 is released from infected enterocytes in a soluble form capable of diffusing within the intestinal lumen and interacting with host plasma membrane receptors on neighboring epithelial cells such as integrins ITGA1/ITGB1 and ITGA2/ITGB1.</text>
</comment>
<comment type="subunit">
    <text evidence="1">Homotetramer. Interacts with the immature particle in the viroplasm. Interacts with host CAV1, early and late in infection. Interacts with host integrin ITGA1/ITGB1 heterodimer. Interacts with host integrin ITGA2/ITGB1 heterodimer. Interaction with microtubules blocks trafficking to the Golgi apparatus.</text>
</comment>
<comment type="subcellular location">
    <subcellularLocation>
        <location evidence="1">Host rough endoplasmic reticulum membrane</location>
        <topology evidence="1">Single-pass type III membrane protein</topology>
    </subcellularLocation>
    <subcellularLocation>
        <location evidence="1">Host membrane</location>
        <location evidence="1">Host caveola</location>
        <topology evidence="1">Single-pass type III membrane protein</topology>
    </subcellularLocation>
    <subcellularLocation>
        <location evidence="1">Secreted</location>
    </subcellularLocation>
    <text evidence="1">NSP4 also localizes in vesicular structures which contain autophagosomal markers and associate with viroplasms in virus-infected cells. Additionally, a soluble form of glycosylated NSP4 is secreted despite retention of its transmembrane domain.</text>
</comment>
<comment type="domain">
    <text evidence="1">Binds 1 calcium ion per tetramer.</text>
</comment>
<comment type="PTM">
    <text evidence="1">The N-glycosyl content is primarily Man(9)GlcNAc, with a small amount of Man(8)GlcNAc.</text>
</comment>
<comment type="similarity">
    <text evidence="1">Belongs to the rotavirus NSP4 family.</text>
</comment>
<sequence length="175" mass="20349">MEKLTDLNYTLSVITLMNSTLHTILEDPGMAYFPYIASVLIVLFTLHKASIPTMKIALKTSKCSYKVVKYCIVTIFNTLLKLAGYKEQITTKDEIEKQMDRVVKEMRRQLEMIDKLTTREIEQVELLKRIYDRLMARSTDGIDMTKEINQKNVRTLEEWESGKNPYEPKEVTAAM</sequence>
<organism>
    <name type="scientific">Rotavirus A (strain RVA/Human/Indonesia/69M/1980/G8P4[10])</name>
    <name type="common">RV-A</name>
    <dbReference type="NCBI Taxonomy" id="10947"/>
    <lineage>
        <taxon>Viruses</taxon>
        <taxon>Riboviria</taxon>
        <taxon>Orthornavirae</taxon>
        <taxon>Duplornaviricota</taxon>
        <taxon>Resentoviricetes</taxon>
        <taxon>Reovirales</taxon>
        <taxon>Sedoreoviridae</taxon>
        <taxon>Rotavirus</taxon>
        <taxon>Rotavirus A</taxon>
    </lineage>
</organism>
<accession>B3SRQ8</accession>
<reference key="1">
    <citation type="journal article" date="2008" name="J. Virol.">
        <title>Group A human rotavirus genomics: evidence that gene constellations are influenced by viral protein interactions.</title>
        <authorList>
            <person name="Heiman E.M."/>
            <person name="McDonald S.M."/>
            <person name="Barro M."/>
            <person name="Taraporewala Z.F."/>
            <person name="Bar-Magen T."/>
            <person name="Patton J.T."/>
        </authorList>
    </citation>
    <scope>NUCLEOTIDE SEQUENCE [GENOMIC DNA]</scope>
</reference>
<feature type="chain" id="PRO_0000369478" description="Non-structural glycoprotein 4">
    <location>
        <begin position="1"/>
        <end position="175"/>
    </location>
</feature>
<feature type="topological domain" description="Lumenal" evidence="1">
    <location>
        <begin position="1"/>
        <end position="28"/>
    </location>
</feature>
<feature type="transmembrane region" description="Helical; Signal-anchor for type III membrane protein" evidence="1">
    <location>
        <begin position="29"/>
        <end position="51"/>
    </location>
</feature>
<feature type="topological domain" description="Cytoplasmic" evidence="1">
    <location>
        <begin position="52"/>
        <end position="175"/>
    </location>
</feature>
<feature type="binding site" evidence="1">
    <location>
        <position position="120"/>
    </location>
    <ligand>
        <name>Ca(2+)</name>
        <dbReference type="ChEBI" id="CHEBI:29108"/>
    </ligand>
</feature>
<feature type="binding site" evidence="1">
    <location>
        <position position="123"/>
    </location>
    <ligand>
        <name>Ca(2+)</name>
        <dbReference type="ChEBI" id="CHEBI:29108"/>
    </ligand>
</feature>
<feature type="glycosylation site" description="N-linked (GlcNAc...) asparagine; by host" evidence="1">
    <location>
        <position position="8"/>
    </location>
</feature>
<feature type="glycosylation site" description="N-linked (GlcNAc...) asparagine; by host" evidence="1">
    <location>
        <position position="18"/>
    </location>
</feature>
<dbReference type="EMBL" id="EF672561">
    <property type="protein sequence ID" value="ABV53233.1"/>
    <property type="molecule type" value="Genomic_DNA"/>
</dbReference>
<dbReference type="Proteomes" id="UP000001455">
    <property type="component" value="Genome"/>
</dbReference>
<dbReference type="GO" id="GO:0005576">
    <property type="term" value="C:extracellular region"/>
    <property type="evidence" value="ECO:0007669"/>
    <property type="project" value="UniProtKB-SubCell"/>
</dbReference>
<dbReference type="GO" id="GO:0044155">
    <property type="term" value="C:host caveola"/>
    <property type="evidence" value="ECO:0007669"/>
    <property type="project" value="UniProtKB-SubCell"/>
</dbReference>
<dbReference type="GO" id="GO:0044169">
    <property type="term" value="C:host cell rough endoplasmic reticulum membrane"/>
    <property type="evidence" value="ECO:0007669"/>
    <property type="project" value="UniProtKB-SubCell"/>
</dbReference>
<dbReference type="GO" id="GO:0016020">
    <property type="term" value="C:membrane"/>
    <property type="evidence" value="ECO:0007669"/>
    <property type="project" value="UniProtKB-UniRule"/>
</dbReference>
<dbReference type="GO" id="GO:0015267">
    <property type="term" value="F:channel activity"/>
    <property type="evidence" value="ECO:0007669"/>
    <property type="project" value="UniProtKB-KW"/>
</dbReference>
<dbReference type="GO" id="GO:0046872">
    <property type="term" value="F:metal ion binding"/>
    <property type="evidence" value="ECO:0007669"/>
    <property type="project" value="UniProtKB-UniRule"/>
</dbReference>
<dbReference type="GO" id="GO:0090729">
    <property type="term" value="F:toxin activity"/>
    <property type="evidence" value="ECO:0007669"/>
    <property type="project" value="UniProtKB-UniRule"/>
</dbReference>
<dbReference type="GO" id="GO:0034220">
    <property type="term" value="P:monoatomic ion transmembrane transport"/>
    <property type="evidence" value="ECO:0007669"/>
    <property type="project" value="UniProtKB-KW"/>
</dbReference>
<dbReference type="GO" id="GO:0039520">
    <property type="term" value="P:symbiont-mediated activation of host autophagy"/>
    <property type="evidence" value="ECO:0007669"/>
    <property type="project" value="UniProtKB-KW"/>
</dbReference>
<dbReference type="GO" id="GO:0016032">
    <property type="term" value="P:viral process"/>
    <property type="evidence" value="ECO:0007669"/>
    <property type="project" value="UniProtKB-UniRule"/>
</dbReference>
<dbReference type="FunFam" id="1.20.5.430:FF:000005">
    <property type="entry name" value="Non-structural glycoprotein 4"/>
    <property type="match status" value="1"/>
</dbReference>
<dbReference type="Gene3D" id="1.20.5.430">
    <property type="match status" value="1"/>
</dbReference>
<dbReference type="HAMAP" id="MF_04091">
    <property type="entry name" value="ROTA_NSP4"/>
    <property type="match status" value="1"/>
</dbReference>
<dbReference type="InterPro" id="IPR002107">
    <property type="entry name" value="Rotavirus_NSP4"/>
</dbReference>
<dbReference type="Pfam" id="PF01452">
    <property type="entry name" value="Rota_NSP4"/>
    <property type="match status" value="1"/>
</dbReference>
<dbReference type="SUPFAM" id="SSF58030">
    <property type="entry name" value="Rotavirus nonstructural proteins"/>
    <property type="match status" value="1"/>
</dbReference>
<keyword id="KW-1072">Activation of host autophagy by virus</keyword>
<keyword id="KW-0106">Calcium</keyword>
<keyword id="KW-0260">Enterotoxin</keyword>
<keyword id="KW-0325">Glycoprotein</keyword>
<keyword id="KW-1038">Host endoplasmic reticulum</keyword>
<keyword id="KW-1043">Host membrane</keyword>
<keyword id="KW-0945">Host-virus interaction</keyword>
<keyword id="KW-0407">Ion channel</keyword>
<keyword id="KW-0406">Ion transport</keyword>
<keyword id="KW-0472">Membrane</keyword>
<keyword id="KW-0479">Metal-binding</keyword>
<keyword id="KW-0964">Secreted</keyword>
<keyword id="KW-0735">Signal-anchor</keyword>
<keyword id="KW-0800">Toxin</keyword>
<keyword id="KW-0812">Transmembrane</keyword>
<keyword id="KW-1133">Transmembrane helix</keyword>
<keyword id="KW-0813">Transport</keyword>
<keyword id="KW-1182">Viral ion channel</keyword>
<keyword id="KW-0843">Virulence</keyword>
<name>NSP4_ROTH6</name>
<evidence type="ECO:0000255" key="1">
    <source>
        <dbReference type="HAMAP-Rule" id="MF_04091"/>
    </source>
</evidence>
<proteinExistence type="inferred from homology"/>
<protein>
    <recommendedName>
        <fullName evidence="1">Non-structural glycoprotein 4</fullName>
        <shortName evidence="1">NSP4</shortName>
    </recommendedName>
    <alternativeName>
        <fullName evidence="1">NCVP5</fullName>
    </alternativeName>
    <alternativeName>
        <fullName evidence="1">NS28</fullName>
    </alternativeName>
</protein>
<organismHost>
    <name type="scientific">Homo sapiens</name>
    <name type="common">Human</name>
    <dbReference type="NCBI Taxonomy" id="9606"/>
</organismHost>